<sequence>MSKAGASLATCYGPVSADVMAKAENIRLLILDVDGVLSDGLIYMGNNGEELKAFNVRDGYGIRCALTSDIEVAIITGRKAKLVEDRCATLGITHLYQGQSNKLIAFSDLLEKLAIAPENVAYVGDDLIDWPVMEKVGLSVAVADAHPLLIPRADYVTRIAGGRGAVREVCDLLLLAQGKLDEAKGQSI</sequence>
<feature type="initiator methionine" description="Removed" evidence="3">
    <location>
        <position position="1"/>
    </location>
</feature>
<feature type="chain" id="PRO_0000444889" description="3-deoxy-D-manno-octulosonate 8-phosphate phosphatase KdsC">
    <location>
        <begin position="2"/>
        <end position="188"/>
    </location>
</feature>
<feature type="binding site" evidence="2">
    <location>
        <position position="32"/>
    </location>
    <ligand>
        <name>Mg(2+)</name>
        <dbReference type="ChEBI" id="CHEBI:18420"/>
    </ligand>
</feature>
<feature type="binding site" evidence="2">
    <location>
        <position position="34"/>
    </location>
    <ligand>
        <name>Mg(2+)</name>
        <dbReference type="ChEBI" id="CHEBI:18420"/>
    </ligand>
</feature>
<feature type="binding site" evidence="2">
    <location>
        <position position="34"/>
    </location>
    <ligand>
        <name>substrate</name>
    </ligand>
</feature>
<feature type="binding site" evidence="2">
    <location>
        <begin position="55"/>
        <end position="59"/>
    </location>
    <ligand>
        <name>substrate</name>
    </ligand>
</feature>
<feature type="binding site" evidence="2">
    <location>
        <position position="63"/>
    </location>
    <ligand>
        <name>substrate</name>
    </ligand>
</feature>
<feature type="binding site" evidence="2">
    <location>
        <position position="78"/>
    </location>
    <ligand>
        <name>substrate</name>
    </ligand>
</feature>
<feature type="binding site" evidence="2">
    <location>
        <position position="86"/>
    </location>
    <ligand>
        <name>substrate</name>
    </ligand>
</feature>
<feature type="binding site" evidence="2">
    <location>
        <position position="102"/>
    </location>
    <ligand>
        <name>substrate</name>
    </ligand>
</feature>
<feature type="binding site" evidence="2">
    <location>
        <position position="125"/>
    </location>
    <ligand>
        <name>Mg(2+)</name>
        <dbReference type="ChEBI" id="CHEBI:18420"/>
    </ligand>
</feature>
<accession>A0A140N5J7</accession>
<protein>
    <recommendedName>
        <fullName evidence="4">3-deoxy-D-manno-octulosonate 8-phosphate phosphatase KdsC</fullName>
        <ecNumber evidence="3">3.1.3.45</ecNumber>
    </recommendedName>
    <alternativeName>
        <fullName evidence="4">KDO 8-P phosphatase</fullName>
    </alternativeName>
</protein>
<evidence type="ECO:0000250" key="1">
    <source>
        <dbReference type="UniProtKB" id="P0ABZ4"/>
    </source>
</evidence>
<evidence type="ECO:0000250" key="2">
    <source>
        <dbReference type="UniProtKB" id="P67653"/>
    </source>
</evidence>
<evidence type="ECO:0000269" key="3">
    <source>
    </source>
</evidence>
<evidence type="ECO:0000303" key="4">
    <source>
    </source>
</evidence>
<evidence type="ECO:0000305" key="5"/>
<evidence type="ECO:0000305" key="6">
    <source>
    </source>
</evidence>
<evidence type="ECO:0000312" key="7">
    <source>
        <dbReference type="EMBL" id="ACT27614.1"/>
    </source>
</evidence>
<dbReference type="EC" id="3.1.3.45" evidence="3"/>
<dbReference type="EMBL" id="CP001665">
    <property type="protein sequence ID" value="ACT27614.1"/>
    <property type="molecule type" value="Genomic_DNA"/>
</dbReference>
<dbReference type="RefSeq" id="WP_000030016.1">
    <property type="nucleotide sequence ID" value="NZ_JADXDS010000024.1"/>
</dbReference>
<dbReference type="SMR" id="A0A140N5J7"/>
<dbReference type="KEGG" id="ebd:ECBD_0544"/>
<dbReference type="KEGG" id="ebe:B21_03014"/>
<dbReference type="KEGG" id="ebl:ECD_03063"/>
<dbReference type="PATRIC" id="fig|469008.15.peg.3103"/>
<dbReference type="eggNOG" id="COG1778">
    <property type="taxonomic scope" value="Bacteria"/>
</dbReference>
<dbReference type="HOGENOM" id="CLU_106694_0_1_6"/>
<dbReference type="BioCyc" id="MetaCyc:GCQ7-3299-MONOMER"/>
<dbReference type="SABIO-RK" id="A0A140N5J7"/>
<dbReference type="UniPathway" id="UPA00030"/>
<dbReference type="UniPathway" id="UPA00357">
    <property type="reaction ID" value="UER00475"/>
</dbReference>
<dbReference type="GO" id="GO:0019143">
    <property type="term" value="F:3-deoxy-manno-octulosonate-8-phosphatase activity"/>
    <property type="evidence" value="ECO:0007669"/>
    <property type="project" value="UniProtKB-EC"/>
</dbReference>
<dbReference type="GO" id="GO:0046872">
    <property type="term" value="F:metal ion binding"/>
    <property type="evidence" value="ECO:0007669"/>
    <property type="project" value="UniProtKB-KW"/>
</dbReference>
<dbReference type="GO" id="GO:0008781">
    <property type="term" value="F:N-acylneuraminate cytidylyltransferase activity"/>
    <property type="evidence" value="ECO:0007669"/>
    <property type="project" value="TreeGrafter"/>
</dbReference>
<dbReference type="GO" id="GO:0009103">
    <property type="term" value="P:lipopolysaccharide biosynthetic process"/>
    <property type="evidence" value="ECO:0007669"/>
    <property type="project" value="UniProtKB-UniPathway"/>
</dbReference>
<dbReference type="CDD" id="cd01630">
    <property type="entry name" value="HAD_KDO-like"/>
    <property type="match status" value="1"/>
</dbReference>
<dbReference type="FunFam" id="3.40.50.1000:FF:000029">
    <property type="entry name" value="3-deoxy-D-manno-octulosonate 8-phosphate phosphatase KdsC"/>
    <property type="match status" value="1"/>
</dbReference>
<dbReference type="Gene3D" id="3.40.50.1000">
    <property type="entry name" value="HAD superfamily/HAD-like"/>
    <property type="match status" value="1"/>
</dbReference>
<dbReference type="InterPro" id="IPR050793">
    <property type="entry name" value="CMP-NeuNAc_synthase"/>
</dbReference>
<dbReference type="InterPro" id="IPR036412">
    <property type="entry name" value="HAD-like_sf"/>
</dbReference>
<dbReference type="InterPro" id="IPR023214">
    <property type="entry name" value="HAD_sf"/>
</dbReference>
<dbReference type="InterPro" id="IPR010023">
    <property type="entry name" value="KdsC_fam"/>
</dbReference>
<dbReference type="NCBIfam" id="TIGR01670">
    <property type="entry name" value="KdsC-phosphatas"/>
    <property type="match status" value="1"/>
</dbReference>
<dbReference type="NCBIfam" id="NF007019">
    <property type="entry name" value="PRK09484.1"/>
    <property type="match status" value="1"/>
</dbReference>
<dbReference type="PANTHER" id="PTHR21485">
    <property type="entry name" value="HAD SUPERFAMILY MEMBERS CMAS AND KDSC"/>
    <property type="match status" value="1"/>
</dbReference>
<dbReference type="PANTHER" id="PTHR21485:SF6">
    <property type="entry name" value="N-ACYLNEURAMINATE CYTIDYLYLTRANSFERASE-RELATED"/>
    <property type="match status" value="1"/>
</dbReference>
<dbReference type="Pfam" id="PF08282">
    <property type="entry name" value="Hydrolase_3"/>
    <property type="match status" value="1"/>
</dbReference>
<dbReference type="PIRSF" id="PIRSF006118">
    <property type="entry name" value="KDO8-P_Ptase"/>
    <property type="match status" value="1"/>
</dbReference>
<dbReference type="SFLD" id="SFLDG01138">
    <property type="entry name" value="C1.6.2:_Deoxy-d-mannose-octulo"/>
    <property type="match status" value="1"/>
</dbReference>
<dbReference type="SFLD" id="SFLDG01136">
    <property type="entry name" value="C1.6:_Phosphoserine_Phosphatas"/>
    <property type="match status" value="1"/>
</dbReference>
<dbReference type="SUPFAM" id="SSF56784">
    <property type="entry name" value="HAD-like"/>
    <property type="match status" value="1"/>
</dbReference>
<keyword id="KW-0903">Direct protein sequencing</keyword>
<keyword id="KW-0378">Hydrolase</keyword>
<keyword id="KW-0448">Lipopolysaccharide biosynthesis</keyword>
<keyword id="KW-0460">Magnesium</keyword>
<keyword id="KW-0479">Metal-binding</keyword>
<proteinExistence type="evidence at protein level"/>
<name>KDSC_ECOBD</name>
<reference key="1">
    <citation type="submission" date="2009-07" db="EMBL/GenBank/DDBJ databases">
        <title>Complete sequence of Escherichia coli BL21(DE3).</title>
        <authorList>
            <person name="Lucas S."/>
            <person name="Copeland A."/>
            <person name="Lapidus A."/>
            <person name="Glavina del Rio T."/>
            <person name="Dalin E."/>
            <person name="Tice H."/>
            <person name="Bruce D."/>
            <person name="Goodwin L."/>
            <person name="Pitluck S."/>
            <person name="LaButti K.M."/>
            <person name="Clum A."/>
            <person name="Larimer F."/>
            <person name="Land M."/>
            <person name="Hauser L."/>
            <person name="Kyrpides N."/>
            <person name="Anderson I."/>
            <person name="Sorek R."/>
            <person name="Rubin E."/>
        </authorList>
    </citation>
    <scope>NUCLEOTIDE SEQUENCE [LARGE SCALE GENOMIC DNA]</scope>
    <source>
        <strain>B / BL21-DE3</strain>
    </source>
</reference>
<reference key="2">
    <citation type="journal article" date="2003" name="J. Biol. Chem.">
        <title>Escherichia coli YrbI is 3-deoxy-D-manno-octulosonate 8-phosphate phosphatase.</title>
        <authorList>
            <person name="Wu J."/>
            <person name="Woodard R.W."/>
        </authorList>
    </citation>
    <scope>PROTEIN SEQUENCE OF 2-10</scope>
    <scope>FUNCTION</scope>
    <scope>CATALYTIC ACTIVITY</scope>
    <scope>COFACTOR</scope>
    <scope>BIOPHYSICOCHEMICAL PROPERTIES</scope>
    <scope>ACTIVITY REGULATION</scope>
    <scope>PATHWAY</scope>
    <scope>MASS SPECTROMETRY</scope>
    <scope>SUBUNIT</scope>
    <source>
        <strain>B / BL21-DE3</strain>
    </source>
</reference>
<organism>
    <name type="scientific">Escherichia coli (strain B / BL21-DE3)</name>
    <dbReference type="NCBI Taxonomy" id="469008"/>
    <lineage>
        <taxon>Bacteria</taxon>
        <taxon>Pseudomonadati</taxon>
        <taxon>Pseudomonadota</taxon>
        <taxon>Gammaproteobacteria</taxon>
        <taxon>Enterobacterales</taxon>
        <taxon>Enterobacteriaceae</taxon>
        <taxon>Escherichia</taxon>
    </lineage>
</organism>
<comment type="function">
    <text evidence="3">Catalyzes the hydrolysis of 3-deoxy-D-manno-octulosonate 8-phosphate (KDO 8-P) to 3-deoxy-D-manno-octulosonate (KDO) and inorganic phosphate.</text>
</comment>
<comment type="catalytic activity">
    <reaction evidence="3">
        <text>3-deoxy-alpha-D-manno-2-octulosonate-8-phosphate + H2O = 3-deoxy-alpha-D-manno-oct-2-ulosonate + phosphate</text>
        <dbReference type="Rhea" id="RHEA:11500"/>
        <dbReference type="ChEBI" id="CHEBI:15377"/>
        <dbReference type="ChEBI" id="CHEBI:43474"/>
        <dbReference type="ChEBI" id="CHEBI:85985"/>
        <dbReference type="ChEBI" id="CHEBI:85986"/>
        <dbReference type="EC" id="3.1.3.45"/>
    </reaction>
</comment>
<comment type="cofactor">
    <cofactor evidence="3">
        <name>Mg(2+)</name>
        <dbReference type="ChEBI" id="CHEBI:18420"/>
    </cofactor>
    <cofactor evidence="3">
        <name>Co(2+)</name>
        <dbReference type="ChEBI" id="CHEBI:48828"/>
    </cofactor>
    <text evidence="3">Mg(2+). The phosphatase activity is also stimulated by cobalt ions, whereas baryum, zinc, and manganese ions are less effective stimulators.</text>
</comment>
<comment type="activity regulation">
    <text evidence="3">Inhibited by calcium, cadmium, mercury, and copper ions.</text>
</comment>
<comment type="biophysicochemical properties">
    <kinetics>
        <KM evidence="3">75 uM for KDO 8-P</KM>
        <Vmax evidence="3">500.0 umol/min/mg enzyme</Vmax>
        <text evidence="3">kcat is 175 sec(-1).</text>
    </kinetics>
    <phDependence>
        <text evidence="3">Optimum pH is 5.5. High catalytic activity is observed between pH 5.5 and 7.0.</text>
    </phDependence>
</comment>
<comment type="pathway">
    <text evidence="6">Carbohydrate biosynthesis; 3-deoxy-D-manno-octulosonate biosynthesis; 3-deoxy-D-manno-octulosonate from D-ribulose 5-phosphate: step 3/3.</text>
</comment>
<comment type="pathway">
    <text evidence="6">Bacterial outer membrane biogenesis; lipopolysaccharide biosynthesis.</text>
</comment>
<comment type="subunit">
    <text evidence="3">Homotetramer.</text>
</comment>
<comment type="mass spectrometry"/>
<comment type="similarity">
    <text evidence="5">Belongs to the KdsC family.</text>
</comment>
<gene>
    <name evidence="1" type="primary">kdsC</name>
    <name evidence="7" type="ordered locus">ECBD_0544</name>
</gene>